<sequence>MFIALWEFFYGHFFRFWMKWLLRQMTGKCELQRIFDTYVGAQRTHRIENSLTYSKNKVLQKATLVVQSEVDRCVEDIMKEKNINPEKDASFKICMKACLLQISGYKQLYLDVESVRKKPYDSDNLQHEKLLIKLWNLLMPTKKLKARISKQWADIGFQGDDPKTDFRGMGILGLINLVYFSENYTSEAHQILSRSNHPKLGYSYAIVGINLTEMAYSLLKSEALKFHLYNFVPGIPTMEHFHQFYCYLVYEFDKFWFEEKPESIMYFNVYREKFHEKIKGLLLDCNVSLTLKI</sequence>
<reference key="1">
    <citation type="submission" date="2006-09" db="EMBL/GenBank/DDBJ databases">
        <authorList>
            <consortium name="NIH - Mammalian Gene Collection (MGC) project"/>
        </authorList>
    </citation>
    <scope>NUCLEOTIDE SEQUENCE [LARGE SCALE MRNA]</scope>
    <source>
        <strain>Hereford</strain>
        <tissue>Fetal skin</tissue>
    </source>
</reference>
<reference key="2">
    <citation type="journal article" date="2007" name="J. Biol. Chem.">
        <title>ELMOD2 is an Arl2 GTPase-activating protein that also acts on Arfs.</title>
        <authorList>
            <person name="Bowzard J.B."/>
            <person name="Cheng D."/>
            <person name="Peng J."/>
            <person name="Kahn R.A."/>
        </authorList>
    </citation>
    <scope>PARTIAL PROTEIN SEQUENCE</scope>
    <scope>IDENTIFICATION BY MASS SPECTROMETRY</scope>
</reference>
<accession>Q08DZ3</accession>
<gene>
    <name type="primary">ELMOD2</name>
</gene>
<organism>
    <name type="scientific">Bos taurus</name>
    <name type="common">Bovine</name>
    <dbReference type="NCBI Taxonomy" id="9913"/>
    <lineage>
        <taxon>Eukaryota</taxon>
        <taxon>Metazoa</taxon>
        <taxon>Chordata</taxon>
        <taxon>Craniata</taxon>
        <taxon>Vertebrata</taxon>
        <taxon>Euteleostomi</taxon>
        <taxon>Mammalia</taxon>
        <taxon>Eutheria</taxon>
        <taxon>Laurasiatheria</taxon>
        <taxon>Artiodactyla</taxon>
        <taxon>Ruminantia</taxon>
        <taxon>Pecora</taxon>
        <taxon>Bovidae</taxon>
        <taxon>Bovinae</taxon>
        <taxon>Bos</taxon>
    </lineage>
</organism>
<proteinExistence type="evidence at protein level"/>
<name>ELMD2_BOVIN</name>
<comment type="function">
    <text>Acts as a GTPase-activating protein (GAP) toward guanine nucleotide exchange factors like ARL2, ARL3, ARF1 and ARF6, but not for GTPases outside the Arf family.</text>
</comment>
<dbReference type="EMBL" id="BC123498">
    <property type="protein sequence ID" value="AAI23499.1"/>
    <property type="molecule type" value="mRNA"/>
</dbReference>
<dbReference type="RefSeq" id="NP_001069173.1">
    <property type="nucleotide sequence ID" value="NM_001075705.1"/>
</dbReference>
<dbReference type="RefSeq" id="XP_005217611.1">
    <property type="nucleotide sequence ID" value="XM_005217554.5"/>
</dbReference>
<dbReference type="SMR" id="Q08DZ3"/>
<dbReference type="FunCoup" id="Q08DZ3">
    <property type="interactions" value="3196"/>
</dbReference>
<dbReference type="STRING" id="9913.ENSBTAP00000018612"/>
<dbReference type="PaxDb" id="9913-ENSBTAP00000018612"/>
<dbReference type="Ensembl" id="ENSBTAT00000018612.6">
    <property type="protein sequence ID" value="ENSBTAP00000018612.5"/>
    <property type="gene ID" value="ENSBTAG00000014007.7"/>
</dbReference>
<dbReference type="GeneID" id="515278"/>
<dbReference type="KEGG" id="bta:515278"/>
<dbReference type="CTD" id="255520"/>
<dbReference type="VEuPathDB" id="HostDB:ENSBTAG00000014007"/>
<dbReference type="VGNC" id="VGNC:28442">
    <property type="gene designation" value="ELMOD2"/>
</dbReference>
<dbReference type="eggNOG" id="KOG2998">
    <property type="taxonomic scope" value="Eukaryota"/>
</dbReference>
<dbReference type="GeneTree" id="ENSGT00940000156589"/>
<dbReference type="HOGENOM" id="CLU_056289_0_0_1"/>
<dbReference type="InParanoid" id="Q08DZ3"/>
<dbReference type="OMA" id="WMKWILR"/>
<dbReference type="OrthoDB" id="67155at2759"/>
<dbReference type="TreeFam" id="TF323472"/>
<dbReference type="Proteomes" id="UP000009136">
    <property type="component" value="Chromosome 17"/>
</dbReference>
<dbReference type="Bgee" id="ENSBTAG00000014007">
    <property type="expression patterns" value="Expressed in semen and 108 other cell types or tissues"/>
</dbReference>
<dbReference type="GO" id="GO:0032991">
    <property type="term" value="C:protein-containing complex"/>
    <property type="evidence" value="ECO:0000314"/>
    <property type="project" value="AgBase"/>
</dbReference>
<dbReference type="GO" id="GO:0005096">
    <property type="term" value="F:GTPase activator activity"/>
    <property type="evidence" value="ECO:0000314"/>
    <property type="project" value="AgBase"/>
</dbReference>
<dbReference type="GO" id="GO:0050688">
    <property type="term" value="P:regulation of defense response to virus"/>
    <property type="evidence" value="ECO:0000250"/>
    <property type="project" value="UniProtKB"/>
</dbReference>
<dbReference type="InterPro" id="IPR006816">
    <property type="entry name" value="ELMO_dom"/>
</dbReference>
<dbReference type="InterPro" id="IPR050868">
    <property type="entry name" value="ELMO_domain-containing"/>
</dbReference>
<dbReference type="PANTHER" id="PTHR12771:SF47">
    <property type="entry name" value="ELMO DOMAIN-CONTAINING PROTEIN 2"/>
    <property type="match status" value="1"/>
</dbReference>
<dbReference type="PANTHER" id="PTHR12771">
    <property type="entry name" value="ENGULFMENT AND CELL MOTILITY"/>
    <property type="match status" value="1"/>
</dbReference>
<dbReference type="Pfam" id="PF04727">
    <property type="entry name" value="ELMO_CED12"/>
    <property type="match status" value="1"/>
</dbReference>
<dbReference type="PROSITE" id="PS51335">
    <property type="entry name" value="ELMO"/>
    <property type="match status" value="1"/>
</dbReference>
<protein>
    <recommendedName>
        <fullName>ELMO domain-containing protein 2</fullName>
    </recommendedName>
</protein>
<keyword id="KW-0903">Direct protein sequencing</keyword>
<keyword id="KW-0343">GTPase activation</keyword>
<keyword id="KW-1185">Reference proteome</keyword>
<feature type="chain" id="PRO_0000333277" description="ELMO domain-containing protein 2">
    <location>
        <begin position="1"/>
        <end position="293"/>
    </location>
</feature>
<feature type="domain" description="ELMO" evidence="1">
    <location>
        <begin position="126"/>
        <end position="282"/>
    </location>
</feature>
<evidence type="ECO:0000255" key="1">
    <source>
        <dbReference type="PROSITE-ProRule" id="PRU00664"/>
    </source>
</evidence>